<organism>
    <name type="scientific">Shouchella clausii (strain KSM-K16)</name>
    <name type="common">Alkalihalobacillus clausii</name>
    <dbReference type="NCBI Taxonomy" id="66692"/>
    <lineage>
        <taxon>Bacteria</taxon>
        <taxon>Bacillati</taxon>
        <taxon>Bacillota</taxon>
        <taxon>Bacilli</taxon>
        <taxon>Bacillales</taxon>
        <taxon>Bacillaceae</taxon>
        <taxon>Shouchella</taxon>
    </lineage>
</organism>
<evidence type="ECO:0000255" key="1">
    <source>
        <dbReference type="HAMAP-Rule" id="MF_00337"/>
    </source>
</evidence>
<accession>Q5WF61</accession>
<protein>
    <recommendedName>
        <fullName evidence="1">Exodeoxyribonuclease 7 small subunit</fullName>
        <ecNumber evidence="1">3.1.11.6</ecNumber>
    </recommendedName>
    <alternativeName>
        <fullName evidence="1">Exodeoxyribonuclease VII small subunit</fullName>
        <shortName evidence="1">Exonuclease VII small subunit</shortName>
    </alternativeName>
</protein>
<gene>
    <name evidence="1" type="primary">xseB</name>
    <name type="ordered locus">ABC2464</name>
</gene>
<feature type="chain" id="PRO_0000206920" description="Exodeoxyribonuclease 7 small subunit">
    <location>
        <begin position="1"/>
        <end position="79"/>
    </location>
</feature>
<reference key="1">
    <citation type="submission" date="2003-10" db="EMBL/GenBank/DDBJ databases">
        <title>The complete genome sequence of the alkaliphilic Bacillus clausii KSM-K16.</title>
        <authorList>
            <person name="Takaki Y."/>
            <person name="Kageyama Y."/>
            <person name="Shimamura S."/>
            <person name="Suzuki H."/>
            <person name="Nishi S."/>
            <person name="Hatada Y."/>
            <person name="Kawai S."/>
            <person name="Ito S."/>
            <person name="Horikoshi K."/>
        </authorList>
    </citation>
    <scope>NUCLEOTIDE SEQUENCE [LARGE SCALE GENOMIC DNA]</scope>
    <source>
        <strain>KSM-K16</strain>
    </source>
</reference>
<comment type="function">
    <text evidence="1">Bidirectionally degrades single-stranded DNA into large acid-insoluble oligonucleotides, which are then degraded further into small acid-soluble oligonucleotides.</text>
</comment>
<comment type="catalytic activity">
    <reaction evidence="1">
        <text>Exonucleolytic cleavage in either 5'- to 3'- or 3'- to 5'-direction to yield nucleoside 5'-phosphates.</text>
        <dbReference type="EC" id="3.1.11.6"/>
    </reaction>
</comment>
<comment type="subunit">
    <text evidence="1">Heterooligomer composed of large and small subunits.</text>
</comment>
<comment type="subcellular location">
    <subcellularLocation>
        <location evidence="1">Cytoplasm</location>
    </subcellularLocation>
</comment>
<comment type="similarity">
    <text evidence="1">Belongs to the XseB family.</text>
</comment>
<name>EX7S_SHOC1</name>
<dbReference type="EC" id="3.1.11.6" evidence="1"/>
<dbReference type="EMBL" id="AP006627">
    <property type="protein sequence ID" value="BAD64999.1"/>
    <property type="molecule type" value="Genomic_DNA"/>
</dbReference>
<dbReference type="RefSeq" id="WP_011247307.1">
    <property type="nucleotide sequence ID" value="NC_006582.1"/>
</dbReference>
<dbReference type="SMR" id="Q5WF61"/>
<dbReference type="STRING" id="66692.ABC2464"/>
<dbReference type="GeneID" id="86926690"/>
<dbReference type="KEGG" id="bcl:ABC2464"/>
<dbReference type="eggNOG" id="COG1722">
    <property type="taxonomic scope" value="Bacteria"/>
</dbReference>
<dbReference type="HOGENOM" id="CLU_145918_3_1_9"/>
<dbReference type="OrthoDB" id="9798666at2"/>
<dbReference type="Proteomes" id="UP000001168">
    <property type="component" value="Chromosome"/>
</dbReference>
<dbReference type="GO" id="GO:0005829">
    <property type="term" value="C:cytosol"/>
    <property type="evidence" value="ECO:0007669"/>
    <property type="project" value="TreeGrafter"/>
</dbReference>
<dbReference type="GO" id="GO:0009318">
    <property type="term" value="C:exodeoxyribonuclease VII complex"/>
    <property type="evidence" value="ECO:0007669"/>
    <property type="project" value="InterPro"/>
</dbReference>
<dbReference type="GO" id="GO:0008855">
    <property type="term" value="F:exodeoxyribonuclease VII activity"/>
    <property type="evidence" value="ECO:0007669"/>
    <property type="project" value="UniProtKB-UniRule"/>
</dbReference>
<dbReference type="GO" id="GO:0006308">
    <property type="term" value="P:DNA catabolic process"/>
    <property type="evidence" value="ECO:0007669"/>
    <property type="project" value="UniProtKB-UniRule"/>
</dbReference>
<dbReference type="Gene3D" id="1.10.287.1040">
    <property type="entry name" value="Exonuclease VII, small subunit"/>
    <property type="match status" value="1"/>
</dbReference>
<dbReference type="HAMAP" id="MF_00337">
    <property type="entry name" value="Exonuc_7_S"/>
    <property type="match status" value="1"/>
</dbReference>
<dbReference type="InterPro" id="IPR003761">
    <property type="entry name" value="Exonuc_VII_S"/>
</dbReference>
<dbReference type="InterPro" id="IPR037004">
    <property type="entry name" value="Exonuc_VII_ssu_sf"/>
</dbReference>
<dbReference type="NCBIfam" id="TIGR01280">
    <property type="entry name" value="xseB"/>
    <property type="match status" value="1"/>
</dbReference>
<dbReference type="PANTHER" id="PTHR34137">
    <property type="entry name" value="EXODEOXYRIBONUCLEASE 7 SMALL SUBUNIT"/>
    <property type="match status" value="1"/>
</dbReference>
<dbReference type="PANTHER" id="PTHR34137:SF1">
    <property type="entry name" value="EXODEOXYRIBONUCLEASE 7 SMALL SUBUNIT"/>
    <property type="match status" value="1"/>
</dbReference>
<dbReference type="Pfam" id="PF02609">
    <property type="entry name" value="Exonuc_VII_S"/>
    <property type="match status" value="1"/>
</dbReference>
<dbReference type="PIRSF" id="PIRSF006488">
    <property type="entry name" value="Exonuc_VII_S"/>
    <property type="match status" value="1"/>
</dbReference>
<dbReference type="SUPFAM" id="SSF116842">
    <property type="entry name" value="XseB-like"/>
    <property type="match status" value="1"/>
</dbReference>
<sequence>MAETKDLPFEEAMRQLEWLVEKLEEGNVPLEQAIDMFKEGMDLSQSCHEKLLKVEKQLDQIMHEDGELVEANLEEEANE</sequence>
<proteinExistence type="inferred from homology"/>
<keyword id="KW-0963">Cytoplasm</keyword>
<keyword id="KW-0269">Exonuclease</keyword>
<keyword id="KW-0378">Hydrolase</keyword>
<keyword id="KW-0540">Nuclease</keyword>
<keyword id="KW-1185">Reference proteome</keyword>